<proteinExistence type="inferred from homology"/>
<sequence length="97" mass="10765">MSRKCELTGVGVLYGNNVSHSQRKTRRRFEPNLRSVKFTSDITAGKYRLSVNARCISSVEKAGGFDAYILQADDNVLSSNARAIKKKIIQTKTAKSL</sequence>
<evidence type="ECO:0000255" key="1">
    <source>
        <dbReference type="HAMAP-Rule" id="MF_00373"/>
    </source>
</evidence>
<evidence type="ECO:0000305" key="2"/>
<organism>
    <name type="scientific">Rickettsia akari (strain Hartford)</name>
    <dbReference type="NCBI Taxonomy" id="293614"/>
    <lineage>
        <taxon>Bacteria</taxon>
        <taxon>Pseudomonadati</taxon>
        <taxon>Pseudomonadota</taxon>
        <taxon>Alphaproteobacteria</taxon>
        <taxon>Rickettsiales</taxon>
        <taxon>Rickettsiaceae</taxon>
        <taxon>Rickettsieae</taxon>
        <taxon>Rickettsia</taxon>
        <taxon>spotted fever group</taxon>
    </lineage>
</organism>
<protein>
    <recommendedName>
        <fullName evidence="1">Large ribosomal subunit protein bL28</fullName>
    </recommendedName>
    <alternativeName>
        <fullName evidence="2">50S ribosomal protein L28</fullName>
    </alternativeName>
</protein>
<keyword id="KW-0687">Ribonucleoprotein</keyword>
<keyword id="KW-0689">Ribosomal protein</keyword>
<feature type="chain" id="PRO_1000007336" description="Large ribosomal subunit protein bL28">
    <location>
        <begin position="1"/>
        <end position="97"/>
    </location>
</feature>
<comment type="similarity">
    <text evidence="1">Belongs to the bacterial ribosomal protein bL28 family.</text>
</comment>
<dbReference type="EMBL" id="CP000847">
    <property type="protein sequence ID" value="ABV74483.1"/>
    <property type="molecule type" value="Genomic_DNA"/>
</dbReference>
<dbReference type="RefSeq" id="WP_012013353.1">
    <property type="nucleotide sequence ID" value="NC_009881.1"/>
</dbReference>
<dbReference type="SMR" id="A8GM58"/>
<dbReference type="STRING" id="293614.A1C_00750"/>
<dbReference type="KEGG" id="rak:A1C_00750"/>
<dbReference type="eggNOG" id="COG0227">
    <property type="taxonomic scope" value="Bacteria"/>
</dbReference>
<dbReference type="HOGENOM" id="CLU_064548_4_2_5"/>
<dbReference type="Proteomes" id="UP000006830">
    <property type="component" value="Chromosome"/>
</dbReference>
<dbReference type="GO" id="GO:1990904">
    <property type="term" value="C:ribonucleoprotein complex"/>
    <property type="evidence" value="ECO:0007669"/>
    <property type="project" value="UniProtKB-KW"/>
</dbReference>
<dbReference type="GO" id="GO:0005840">
    <property type="term" value="C:ribosome"/>
    <property type="evidence" value="ECO:0007669"/>
    <property type="project" value="UniProtKB-KW"/>
</dbReference>
<dbReference type="GO" id="GO:0003735">
    <property type="term" value="F:structural constituent of ribosome"/>
    <property type="evidence" value="ECO:0007669"/>
    <property type="project" value="InterPro"/>
</dbReference>
<dbReference type="GO" id="GO:0006412">
    <property type="term" value="P:translation"/>
    <property type="evidence" value="ECO:0007669"/>
    <property type="project" value="UniProtKB-UniRule"/>
</dbReference>
<dbReference type="Gene3D" id="2.30.170.40">
    <property type="entry name" value="Ribosomal protein L28/L24"/>
    <property type="match status" value="1"/>
</dbReference>
<dbReference type="HAMAP" id="MF_00373">
    <property type="entry name" value="Ribosomal_bL28"/>
    <property type="match status" value="1"/>
</dbReference>
<dbReference type="InterPro" id="IPR026569">
    <property type="entry name" value="Ribosomal_bL28"/>
</dbReference>
<dbReference type="InterPro" id="IPR034704">
    <property type="entry name" value="Ribosomal_bL28/bL31-like_sf"/>
</dbReference>
<dbReference type="InterPro" id="IPR001383">
    <property type="entry name" value="Ribosomal_bL28_bact-type"/>
</dbReference>
<dbReference type="InterPro" id="IPR037147">
    <property type="entry name" value="Ribosomal_bL28_sf"/>
</dbReference>
<dbReference type="NCBIfam" id="TIGR00009">
    <property type="entry name" value="L28"/>
    <property type="match status" value="1"/>
</dbReference>
<dbReference type="PANTHER" id="PTHR13528">
    <property type="entry name" value="39S RIBOSOMAL PROTEIN L28, MITOCHONDRIAL"/>
    <property type="match status" value="1"/>
</dbReference>
<dbReference type="PANTHER" id="PTHR13528:SF2">
    <property type="entry name" value="LARGE RIBOSOMAL SUBUNIT PROTEIN BL28M"/>
    <property type="match status" value="1"/>
</dbReference>
<dbReference type="Pfam" id="PF00830">
    <property type="entry name" value="Ribosomal_L28"/>
    <property type="match status" value="1"/>
</dbReference>
<dbReference type="SUPFAM" id="SSF143800">
    <property type="entry name" value="L28p-like"/>
    <property type="match status" value="1"/>
</dbReference>
<accession>A8GM58</accession>
<name>RL28_RICAH</name>
<reference key="1">
    <citation type="submission" date="2007-09" db="EMBL/GenBank/DDBJ databases">
        <title>Complete genome sequence of Rickettsia akari.</title>
        <authorList>
            <person name="Madan A."/>
            <person name="Fahey J."/>
            <person name="Helton E."/>
            <person name="Ketteman M."/>
            <person name="Madan A."/>
            <person name="Rodrigues S."/>
            <person name="Sanchez A."/>
            <person name="Whiting M."/>
            <person name="Dasch G."/>
            <person name="Eremeeva M."/>
        </authorList>
    </citation>
    <scope>NUCLEOTIDE SEQUENCE [LARGE SCALE GENOMIC DNA]</scope>
    <source>
        <strain>Hartford</strain>
    </source>
</reference>
<gene>
    <name evidence="1" type="primary">rpmB</name>
    <name type="ordered locus">A1C_00750</name>
</gene>